<reference key="1">
    <citation type="journal article" date="2005" name="Science">
        <title>The transcriptional landscape of the mammalian genome.</title>
        <authorList>
            <person name="Carninci P."/>
            <person name="Kasukawa T."/>
            <person name="Katayama S."/>
            <person name="Gough J."/>
            <person name="Frith M.C."/>
            <person name="Maeda N."/>
            <person name="Oyama R."/>
            <person name="Ravasi T."/>
            <person name="Lenhard B."/>
            <person name="Wells C."/>
            <person name="Kodzius R."/>
            <person name="Shimokawa K."/>
            <person name="Bajic V.B."/>
            <person name="Brenner S.E."/>
            <person name="Batalov S."/>
            <person name="Forrest A.R."/>
            <person name="Zavolan M."/>
            <person name="Davis M.J."/>
            <person name="Wilming L.G."/>
            <person name="Aidinis V."/>
            <person name="Allen J.E."/>
            <person name="Ambesi-Impiombato A."/>
            <person name="Apweiler R."/>
            <person name="Aturaliya R.N."/>
            <person name="Bailey T.L."/>
            <person name="Bansal M."/>
            <person name="Baxter L."/>
            <person name="Beisel K.W."/>
            <person name="Bersano T."/>
            <person name="Bono H."/>
            <person name="Chalk A.M."/>
            <person name="Chiu K.P."/>
            <person name="Choudhary V."/>
            <person name="Christoffels A."/>
            <person name="Clutterbuck D.R."/>
            <person name="Crowe M.L."/>
            <person name="Dalla E."/>
            <person name="Dalrymple B.P."/>
            <person name="de Bono B."/>
            <person name="Della Gatta G."/>
            <person name="di Bernardo D."/>
            <person name="Down T."/>
            <person name="Engstrom P."/>
            <person name="Fagiolini M."/>
            <person name="Faulkner G."/>
            <person name="Fletcher C.F."/>
            <person name="Fukushima T."/>
            <person name="Furuno M."/>
            <person name="Futaki S."/>
            <person name="Gariboldi M."/>
            <person name="Georgii-Hemming P."/>
            <person name="Gingeras T.R."/>
            <person name="Gojobori T."/>
            <person name="Green R.E."/>
            <person name="Gustincich S."/>
            <person name="Harbers M."/>
            <person name="Hayashi Y."/>
            <person name="Hensch T.K."/>
            <person name="Hirokawa N."/>
            <person name="Hill D."/>
            <person name="Huminiecki L."/>
            <person name="Iacono M."/>
            <person name="Ikeo K."/>
            <person name="Iwama A."/>
            <person name="Ishikawa T."/>
            <person name="Jakt M."/>
            <person name="Kanapin A."/>
            <person name="Katoh M."/>
            <person name="Kawasawa Y."/>
            <person name="Kelso J."/>
            <person name="Kitamura H."/>
            <person name="Kitano H."/>
            <person name="Kollias G."/>
            <person name="Krishnan S.P."/>
            <person name="Kruger A."/>
            <person name="Kummerfeld S.K."/>
            <person name="Kurochkin I.V."/>
            <person name="Lareau L.F."/>
            <person name="Lazarevic D."/>
            <person name="Lipovich L."/>
            <person name="Liu J."/>
            <person name="Liuni S."/>
            <person name="McWilliam S."/>
            <person name="Madan Babu M."/>
            <person name="Madera M."/>
            <person name="Marchionni L."/>
            <person name="Matsuda H."/>
            <person name="Matsuzawa S."/>
            <person name="Miki H."/>
            <person name="Mignone F."/>
            <person name="Miyake S."/>
            <person name="Morris K."/>
            <person name="Mottagui-Tabar S."/>
            <person name="Mulder N."/>
            <person name="Nakano N."/>
            <person name="Nakauchi H."/>
            <person name="Ng P."/>
            <person name="Nilsson R."/>
            <person name="Nishiguchi S."/>
            <person name="Nishikawa S."/>
            <person name="Nori F."/>
            <person name="Ohara O."/>
            <person name="Okazaki Y."/>
            <person name="Orlando V."/>
            <person name="Pang K.C."/>
            <person name="Pavan W.J."/>
            <person name="Pavesi G."/>
            <person name="Pesole G."/>
            <person name="Petrovsky N."/>
            <person name="Piazza S."/>
            <person name="Reed J."/>
            <person name="Reid J.F."/>
            <person name="Ring B.Z."/>
            <person name="Ringwald M."/>
            <person name="Rost B."/>
            <person name="Ruan Y."/>
            <person name="Salzberg S.L."/>
            <person name="Sandelin A."/>
            <person name="Schneider C."/>
            <person name="Schoenbach C."/>
            <person name="Sekiguchi K."/>
            <person name="Semple C.A."/>
            <person name="Seno S."/>
            <person name="Sessa L."/>
            <person name="Sheng Y."/>
            <person name="Shibata Y."/>
            <person name="Shimada H."/>
            <person name="Shimada K."/>
            <person name="Silva D."/>
            <person name="Sinclair B."/>
            <person name="Sperling S."/>
            <person name="Stupka E."/>
            <person name="Sugiura K."/>
            <person name="Sultana R."/>
            <person name="Takenaka Y."/>
            <person name="Taki K."/>
            <person name="Tammoja K."/>
            <person name="Tan S.L."/>
            <person name="Tang S."/>
            <person name="Taylor M.S."/>
            <person name="Tegner J."/>
            <person name="Teichmann S.A."/>
            <person name="Ueda H.R."/>
            <person name="van Nimwegen E."/>
            <person name="Verardo R."/>
            <person name="Wei C.L."/>
            <person name="Yagi K."/>
            <person name="Yamanishi H."/>
            <person name="Zabarovsky E."/>
            <person name="Zhu S."/>
            <person name="Zimmer A."/>
            <person name="Hide W."/>
            <person name="Bult C."/>
            <person name="Grimmond S.M."/>
            <person name="Teasdale R.D."/>
            <person name="Liu E.T."/>
            <person name="Brusic V."/>
            <person name="Quackenbush J."/>
            <person name="Wahlestedt C."/>
            <person name="Mattick J.S."/>
            <person name="Hume D.A."/>
            <person name="Kai C."/>
            <person name="Sasaki D."/>
            <person name="Tomaru Y."/>
            <person name="Fukuda S."/>
            <person name="Kanamori-Katayama M."/>
            <person name="Suzuki M."/>
            <person name="Aoki J."/>
            <person name="Arakawa T."/>
            <person name="Iida J."/>
            <person name="Imamura K."/>
            <person name="Itoh M."/>
            <person name="Kato T."/>
            <person name="Kawaji H."/>
            <person name="Kawagashira N."/>
            <person name="Kawashima T."/>
            <person name="Kojima M."/>
            <person name="Kondo S."/>
            <person name="Konno H."/>
            <person name="Nakano K."/>
            <person name="Ninomiya N."/>
            <person name="Nishio T."/>
            <person name="Okada M."/>
            <person name="Plessy C."/>
            <person name="Shibata K."/>
            <person name="Shiraki T."/>
            <person name="Suzuki S."/>
            <person name="Tagami M."/>
            <person name="Waki K."/>
            <person name="Watahiki A."/>
            <person name="Okamura-Oho Y."/>
            <person name="Suzuki H."/>
            <person name="Kawai J."/>
            <person name="Hayashizaki Y."/>
        </authorList>
    </citation>
    <scope>NUCLEOTIDE SEQUENCE [LARGE SCALE MRNA] (ISOFORMS 1 AND 2)</scope>
    <source>
        <strain>C57BL/6J</strain>
        <tissue>Egg</tissue>
        <tissue>Testis</tissue>
        <tissue>Wolffian duct</tissue>
    </source>
</reference>
<reference key="2">
    <citation type="journal article" date="2004" name="Genome Res.">
        <title>The status, quality, and expansion of the NIH full-length cDNA project: the Mammalian Gene Collection (MGC).</title>
        <authorList>
            <consortium name="The MGC Project Team"/>
        </authorList>
    </citation>
    <scope>NUCLEOTIDE SEQUENCE [LARGE SCALE MRNA] (ISOFORMS 1 AND 2)</scope>
    <source>
        <strain>C57BL/6J</strain>
        <strain>NMRI</strain>
        <tissue>Head</tissue>
        <tissue>Mammary tumor</tissue>
        <tissue>Placenta</tissue>
    </source>
</reference>
<reference key="3">
    <citation type="journal article" date="1994" name="DNA Cell Biol.">
        <title>Isolation of a cDNA encoding a metal response element binding protein using a novel expression cloning procedure: the one hybrid system.</title>
        <authorList>
            <person name="Inouye C."/>
            <person name="Remondelli P."/>
            <person name="Karin M."/>
            <person name="Elledge S."/>
        </authorList>
    </citation>
    <scope>NUCLEOTIDE SEQUENCE [MRNA] OF 1-476 (ISOFORM 2)</scope>
    <scope>FUNCTION</scope>
    <source>
        <tissue>Lymphoma</tissue>
    </source>
</reference>
<reference key="4">
    <citation type="journal article" date="1997" name="Biochem. J.">
        <title>Interactions of the zinc-regulated factor (ZiRF1) with the mouse metallothionein Ia promoter.</title>
        <authorList>
            <person name="Remondelli P."/>
            <person name="Leone A."/>
        </authorList>
    </citation>
    <scope>FUNCTION</scope>
</reference>
<reference key="5">
    <citation type="journal article" date="2010" name="Cell Stem Cell">
        <title>Polycomb-like 2 associates with PRC2 and regulates transcriptional networks during mouse embryonic stem cell self-renewal and differentiation.</title>
        <authorList>
            <person name="Walker E."/>
            <person name="Chang W.Y."/>
            <person name="Hunkapiller J."/>
            <person name="Cagney G."/>
            <person name="Garcha K."/>
            <person name="Torchia J."/>
            <person name="Krogan N.J."/>
            <person name="Reiter J.F."/>
            <person name="Stanford W.L."/>
        </authorList>
    </citation>
    <scope>FUNCTION</scope>
    <scope>ASSOCIATION WITH THE PRC2 COMPLEX</scope>
</reference>
<reference key="6">
    <citation type="journal article" date="2011" name="Development">
        <title>Polycomblike 2 facilitates the recruitment of PRC2 Polycomb group complexes to the inactive X chromosome and to target loci in embryonic stem cells.</title>
        <authorList>
            <person name="Casanova M."/>
            <person name="Preissner T."/>
            <person name="Cerase A."/>
            <person name="Poot R."/>
            <person name="Yamada D."/>
            <person name="Li X."/>
            <person name="Appanah R."/>
            <person name="Bezstarosti K."/>
            <person name="Demmers J."/>
            <person name="Koseki H."/>
            <person name="Brockdorff N."/>
        </authorList>
    </citation>
    <scope>FUNCTION</scope>
    <scope>ASSOCIATION WITH THE PRC2 COMPLEX</scope>
    <scope>SUBCELLULAR LOCATION</scope>
</reference>
<reference key="7">
    <citation type="journal article" date="2011" name="Mol. Cell. Biol.">
        <title>Mammalian polycomb-like Pcl2/Mtf2 is a novel regulatory component of PRC2 that can differentially modulate polycomb activity both at the Hox gene cluster and at Cdkn2a genes.</title>
        <authorList>
            <person name="Li X."/>
            <person name="Isono K."/>
            <person name="Yamada D."/>
            <person name="Endo T.A."/>
            <person name="Endoh M."/>
            <person name="Shinga J."/>
            <person name="Mizutani-Koseki Y."/>
            <person name="Otte A.P."/>
            <person name="Casanova M."/>
            <person name="Kitamura H."/>
            <person name="Kamijo T."/>
            <person name="Sharif J."/>
            <person name="Ohara O."/>
            <person name="Toyada T."/>
            <person name="Bernstein B.E."/>
            <person name="Brockdorff N."/>
            <person name="Koseki H."/>
        </authorList>
    </citation>
    <scope>FUNCTION</scope>
    <scope>DISRUPTION PHENOTYPE</scope>
</reference>
<reference key="8">
    <citation type="journal article" date="2012" name="Nat. Struct. Mol. Biol.">
        <title>Phf19 links methylated Lys36 of histone H3 to regulation of Polycomb activity.</title>
        <authorList>
            <person name="Ballare C."/>
            <person name="Lange M."/>
            <person name="Lapinaite A."/>
            <person name="Martin G.M."/>
            <person name="Morey L."/>
            <person name="Pascual G."/>
            <person name="Liefke R."/>
            <person name="Simon B."/>
            <person name="Shi Y."/>
            <person name="Gozani O."/>
            <person name="Carlomagno T."/>
            <person name="Benitah S.A."/>
            <person name="Di Croce L."/>
        </authorList>
    </citation>
    <scope>FUNCTION</scope>
    <scope>H3K36ME3-BINDING</scope>
</reference>
<reference key="9">
    <citation type="journal article" date="2012" name="PLoS Genet.">
        <title>Polycomb-like 3 promotes polycomb repressive complex 2 binding to CpG islands and embryonic stem cell self-renewal.</title>
        <authorList>
            <person name="Hunkapiller J."/>
            <person name="Shen Y."/>
            <person name="Diaz A."/>
            <person name="Cagney G."/>
            <person name="McCleary D."/>
            <person name="Ramalho-Santos M."/>
            <person name="Krogan N."/>
            <person name="Ren B."/>
            <person name="Song J.S."/>
            <person name="Reiter J.F."/>
        </authorList>
    </citation>
    <scope>ASSOCIATION WITH THE PRC2 COMPLEX</scope>
</reference>
<reference key="10">
    <citation type="submission" date="2009-02" db="PDB data bank">
        <title>Solution structure of the tudor domain of metal-response element-binding transcription factor 2.</title>
        <authorList>
            <consortium name="RIKEN structural genomics initiative (RSGI)"/>
        </authorList>
    </citation>
    <scope>STRUCTURE BY NMR OF 40-98 AND 104-162</scope>
</reference>
<name>MTF2_MOUSE</name>
<sequence>MRDSTGAGNSLVHKRSPLRRNQKTSASLNKLSLQDGHKAKKPACKFEEGQDVLARWSDGLFYLGTIKKINILKQSCFIIFEDSSKSWVLWKDIQTGATGSGEMVCTICQEEYSEAPNEMVICDKCGQGYHQLCHTPHIDSSVIDSDEKWLCRQCVFATTTKRGGALKKGPNAKALQVMKQTLPYSVADLEWDAGHKTNVQQCYCYCGGPGDWYLKMLQCCKCKQWFHEACVQCLQKPMLFGDRFYTFICSVCSSGPEYLKRLPLQWVDIAHLCLYNLSVIHKKKYFDSELELMTYINENWDRLHPGELADTPKSERYEHVLEALNDYKTMFMSGKEIKKKKHLFGLRIRVPPVPPNVAFKAEKEPEGTSHEFKIKGRKASKPTSDSREVSNGIEKKGKKKSVGRPPGPYTRKMIQKTAELPLDKESVSENPTLDLPCSIGRTEGIAHSSNTSDVDLTGASSANETTSASISRHCGLSDSRKRTRTGRSWPAAIPHLRRRRGRLPRRALQTQNSEVVKDDEGKEDYQFEELNTEILNNLADQELQLNHLKNSITSYFGAAGRIACGEKYRVLARRVTLDGKVQYLVEWEGATAS</sequence>
<comment type="function">
    <text evidence="4 5 6 7 8 9">Polycomb group (PcG) protein that specifically binds histone H3 trimethylated at 'Lys-36' (H3K36me3) and recruits the PRC2 complex, thus enhancing PRC2 H3K27me3 methylation activity (PubMed:20144788, PubMed:21059868, PubMed:21367819, PubMed:22438827, PubMed:23104054). Regulates the transcriptional networks during embryonic stem cell self-renewal and differentiation (PubMed:20144788). Promotes recruitment of the PRC2 complex to the inactive X chromosome in differentiating XX ES cells and PRC2 recruitment to target genes in undifferentiated ES cells (PubMed:21367819). Required to repress Hox genes by enhancing H3K27me3 methylation of the PRC2 complex (PubMed:21059868). In some conditions may act as an inhibitor of PRC2 activity: able to activate the CDKN2A gene and promote cellular senescence by suppressing the catalytic activity of the PRC2 complex locally (PubMed:21059868). Binds to the metal-regulating-element (MRE) of MT1A gene promoter (PubMed:7772254).</text>
</comment>
<comment type="subunit">
    <text evidence="1 6 7">Associates with the PRC2 complex, which consists of the core components EED, EZH1 or EZH2, SUZ12, and RBBP4, and various combinations of accessory subunits including AEBP2, JARID2, PHF19, MTF2 and EPOP (PubMed:21367819, PubMed:22438827). Forms a dimeric PRC2.1 (class 1, PRC-PCL) complex consisting of at least SUZ12, RBBP4, and PHF19 or MTF2; PHF19 and MTF2 stabilize the dimeric structure which enhances PRC2 interaction with chromatin (By similarity).</text>
</comment>
<comment type="interaction">
    <interactant intactId="EBI-2531578">
        <id>Q02395</id>
    </interactant>
    <interactant intactId="EBI-904301">
        <id>Q921E6</id>
        <label>Eed</label>
    </interactant>
    <organismsDiffer>false</organismsDiffer>
    <experiments>3</experiments>
</comment>
<comment type="interaction">
    <interactant intactId="EBI-2531578">
        <id>Q02395</id>
    </interactant>
    <interactant intactId="EBI-2531737">
        <id>P70351</id>
        <label>Ezh1</label>
    </interactant>
    <organismsDiffer>false</organismsDiffer>
    <experiments>3</experiments>
</comment>
<comment type="interaction">
    <interactant intactId="EBI-2531578">
        <id>Q02395</id>
    </interactant>
    <interactant intactId="EBI-904311">
        <id>Q61188</id>
        <label>Ezh2</label>
    </interactant>
    <organismsDiffer>false</organismsDiffer>
    <experiments>4</experiments>
</comment>
<comment type="subcellular location">
    <subcellularLocation>
        <location evidence="6">Nucleus</location>
    </subcellularLocation>
    <text evidence="6">Localizes to chromatin as part of the PRC2 complex.</text>
</comment>
<comment type="alternative products">
    <event type="alternative splicing"/>
    <isoform>
        <id>Q02395-1</id>
        <name>1</name>
        <sequence type="displayed"/>
    </isoform>
    <isoform>
        <id>Q02395-2</id>
        <name>2</name>
        <sequence type="described" ref="VSP_016240"/>
    </isoform>
</comment>
<comment type="domain">
    <text evidence="8">The Tudor domain recognizes and binds H3K36me3.</text>
</comment>
<comment type="disruption phenotype">
    <text evidence="5">Mice survive to birth; however, most of them die before weaning. Axial skeletal alterations that are characteristic of posterior transformations are observed: ectopic ribs that associate with the seventh cervical vertebra (C7) are frequently observed. Consistent with this malformation, sternums are shifted anteriorly. The odontoid process, which is normally a characteristic of the second cervical vertebra (C2), is frequently associated with the first cervical vertebra (C1).</text>
</comment>
<comment type="similarity">
    <text evidence="13">Belongs to the Polycomblike family.</text>
</comment>
<comment type="sequence caution" evidence="13">
    <conflict type="miscellaneous discrepancy">
        <sequence resource="EMBL-CDS" id="AAH24889"/>
    </conflict>
    <text>Contaminating sequence. Potential poly-A sequence.</text>
</comment>
<comment type="sequence caution" evidence="13">
    <conflict type="miscellaneous discrepancy">
        <sequence resource="EMBL-CDS" id="AAH29076"/>
    </conflict>
    <text>Contaminating sequence. Potential poly-A sequence.</text>
</comment>
<feature type="chain" id="PRO_0000059318" description="Metal-response element-binding transcription factor 2">
    <location>
        <begin position="1"/>
        <end position="593"/>
    </location>
</feature>
<feature type="domain" description="Tudor">
    <location>
        <begin position="44"/>
        <end position="101"/>
    </location>
</feature>
<feature type="zinc finger region" description="PHD-type 1" evidence="2">
    <location>
        <begin position="102"/>
        <end position="157"/>
    </location>
</feature>
<feature type="zinc finger region" description="PHD-type 2" evidence="2">
    <location>
        <begin position="201"/>
        <end position="255"/>
    </location>
</feature>
<feature type="region of interest" description="Disordered" evidence="3">
    <location>
        <begin position="1"/>
        <end position="24"/>
    </location>
</feature>
<feature type="region of interest" description="Disordered" evidence="3">
    <location>
        <begin position="357"/>
        <end position="410"/>
    </location>
</feature>
<feature type="region of interest" description="Disordered" evidence="3">
    <location>
        <begin position="444"/>
        <end position="486"/>
    </location>
</feature>
<feature type="compositionally biased region" description="Basic residues" evidence="3">
    <location>
        <begin position="12"/>
        <end position="22"/>
    </location>
</feature>
<feature type="compositionally biased region" description="Basic and acidic residues" evidence="3">
    <location>
        <begin position="360"/>
        <end position="374"/>
    </location>
</feature>
<feature type="compositionally biased region" description="Polar residues" evidence="3">
    <location>
        <begin position="447"/>
        <end position="470"/>
    </location>
</feature>
<feature type="modified residue" description="Phosphothreonine" evidence="1">
    <location>
        <position position="24"/>
    </location>
</feature>
<feature type="modified residue" description="Phosphoserine" evidence="1">
    <location>
        <position position="452"/>
    </location>
</feature>
<feature type="cross-link" description="Glycyl lysine isopeptide (Lys-Gly) (interchain with G-Cter in SUMO2)" evidence="1">
    <location>
        <position position="360"/>
    </location>
</feature>
<feature type="cross-link" description="Glycyl lysine isopeptide (Lys-Gly) (interchain with G-Cter in SUMO2)" evidence="1">
    <location>
        <position position="522"/>
    </location>
</feature>
<feature type="splice variant" id="VSP_016240" description="In isoform 2." evidence="10 11 12">
    <location>
        <begin position="1"/>
        <end position="102"/>
    </location>
</feature>
<feature type="sequence conflict" description="In Ref. 3; AAC34714." evidence="13" ref="3">
    <original>QQ</original>
    <variation>PE</variation>
    <location>
        <begin position="200"/>
        <end position="201"/>
    </location>
</feature>
<feature type="sequence conflict" description="In Ref. 3; AAC34714." evidence="13" ref="3">
    <location>
        <position position="282"/>
    </location>
</feature>
<feature type="sequence conflict" description="In Ref. 2; AAH57163." evidence="13" ref="2">
    <original>E</original>
    <variation>K</variation>
    <location>
        <position position="394"/>
    </location>
</feature>
<feature type="sequence conflict" description="In Ref. 2; AAH57163." evidence="13" ref="2">
    <original>G</original>
    <variation>K</variation>
    <location>
        <position position="397"/>
    </location>
</feature>
<feature type="sequence conflict" description="In Ref. 1; BAC28027." evidence="13" ref="1">
    <original>D</original>
    <variation>G</variation>
    <location>
        <position position="519"/>
    </location>
</feature>
<feature type="strand" evidence="14">
    <location>
        <begin position="51"/>
        <end position="55"/>
    </location>
</feature>
<feature type="strand" evidence="14">
    <location>
        <begin position="61"/>
        <end position="70"/>
    </location>
</feature>
<feature type="turn" evidence="14">
    <location>
        <begin position="71"/>
        <end position="74"/>
    </location>
</feature>
<feature type="strand" evidence="14">
    <location>
        <begin position="75"/>
        <end position="80"/>
    </location>
</feature>
<feature type="turn" evidence="14">
    <location>
        <begin position="81"/>
        <end position="83"/>
    </location>
</feature>
<feature type="strand" evidence="14">
    <location>
        <begin position="84"/>
        <end position="89"/>
    </location>
</feature>
<feature type="turn" evidence="14">
    <location>
        <begin position="90"/>
        <end position="92"/>
    </location>
</feature>
<feature type="strand" evidence="15">
    <location>
        <begin position="105"/>
        <end position="108"/>
    </location>
</feature>
<feature type="strand" evidence="15">
    <location>
        <begin position="119"/>
        <end position="121"/>
    </location>
</feature>
<feature type="strand" evidence="15">
    <location>
        <begin position="123"/>
        <end position="125"/>
    </location>
</feature>
<feature type="strand" evidence="15">
    <location>
        <begin position="128"/>
        <end position="130"/>
    </location>
</feature>
<feature type="turn" evidence="15">
    <location>
        <begin position="131"/>
        <end position="133"/>
    </location>
</feature>
<feature type="strand" evidence="15">
    <location>
        <begin position="134"/>
        <end position="136"/>
    </location>
</feature>
<feature type="helix" evidence="15">
    <location>
        <begin position="140"/>
        <end position="144"/>
    </location>
</feature>
<feature type="helix" evidence="15">
    <location>
        <begin position="152"/>
        <end position="156"/>
    </location>
</feature>
<dbReference type="EMBL" id="AK032798">
    <property type="protein sequence ID" value="BAC28027.1"/>
    <property type="molecule type" value="mRNA"/>
</dbReference>
<dbReference type="EMBL" id="AK032819">
    <property type="protein sequence ID" value="BAC28039.1"/>
    <property type="molecule type" value="mRNA"/>
</dbReference>
<dbReference type="EMBL" id="AK031409">
    <property type="protein sequence ID" value="BAC27390.1"/>
    <property type="molecule type" value="mRNA"/>
</dbReference>
<dbReference type="EMBL" id="AK139685">
    <property type="protein sequence ID" value="BAE24103.1"/>
    <property type="molecule type" value="mRNA"/>
</dbReference>
<dbReference type="EMBL" id="BC057163">
    <property type="protein sequence ID" value="AAH57163.1"/>
    <property type="molecule type" value="mRNA"/>
</dbReference>
<dbReference type="EMBL" id="BC092237">
    <property type="protein sequence ID" value="AAH92237.1"/>
    <property type="molecule type" value="mRNA"/>
</dbReference>
<dbReference type="EMBL" id="BC100340">
    <property type="protein sequence ID" value="AAI00341.1"/>
    <property type="molecule type" value="mRNA"/>
</dbReference>
<dbReference type="EMBL" id="BC024889">
    <property type="protein sequence ID" value="AAH24889.1"/>
    <property type="status" value="ALT_SEQ"/>
    <property type="molecule type" value="mRNA"/>
</dbReference>
<dbReference type="EMBL" id="BC029076">
    <property type="protein sequence ID" value="AAH29076.1"/>
    <property type="status" value="ALT_SEQ"/>
    <property type="molecule type" value="mRNA"/>
</dbReference>
<dbReference type="EMBL" id="S78454">
    <property type="protein sequence ID" value="AAC34714.1"/>
    <property type="molecule type" value="mRNA"/>
</dbReference>
<dbReference type="CCDS" id="CCDS39201.1">
    <molecule id="Q02395-1"/>
</dbReference>
<dbReference type="RefSeq" id="NP_001240806.1">
    <molecule id="Q02395-2"/>
    <property type="nucleotide sequence ID" value="NM_001253877.1"/>
</dbReference>
<dbReference type="RefSeq" id="NP_001240807.1">
    <molecule id="Q02395-2"/>
    <property type="nucleotide sequence ID" value="NM_001253878.1"/>
</dbReference>
<dbReference type="RefSeq" id="NP_001240808.1">
    <molecule id="Q02395-2"/>
    <property type="nucleotide sequence ID" value="NM_001253879.1"/>
</dbReference>
<dbReference type="RefSeq" id="NP_001240809.1">
    <molecule id="Q02395-2"/>
    <property type="nucleotide sequence ID" value="NM_001253880.1"/>
</dbReference>
<dbReference type="RefSeq" id="NP_001346018.1">
    <molecule id="Q02395-2"/>
    <property type="nucleotide sequence ID" value="NM_001359089.1"/>
</dbReference>
<dbReference type="RefSeq" id="NP_038855.2">
    <molecule id="Q02395-1"/>
    <property type="nucleotide sequence ID" value="NM_013827.3"/>
</dbReference>
<dbReference type="RefSeq" id="XP_011247718.1">
    <molecule id="Q02395-2"/>
    <property type="nucleotide sequence ID" value="XM_011249416.4"/>
</dbReference>
<dbReference type="RefSeq" id="XP_017176193.1">
    <property type="nucleotide sequence ID" value="XM_017320704.1"/>
</dbReference>
<dbReference type="RefSeq" id="XP_017176194.1">
    <property type="nucleotide sequence ID" value="XM_017320705.1"/>
</dbReference>
<dbReference type="RefSeq" id="XP_030110053.1">
    <molecule id="Q02395-2"/>
    <property type="nucleotide sequence ID" value="XM_030254193.2"/>
</dbReference>
<dbReference type="RefSeq" id="XP_030110054.1">
    <molecule id="Q02395-2"/>
    <property type="nucleotide sequence ID" value="XM_030254194.2"/>
</dbReference>
<dbReference type="RefSeq" id="XP_036020747.1">
    <molecule id="Q02395-2"/>
    <property type="nucleotide sequence ID" value="XM_036164854.1"/>
</dbReference>
<dbReference type="RefSeq" id="XP_036020748.1">
    <molecule id="Q02395-2"/>
    <property type="nucleotide sequence ID" value="XM_036164855.1"/>
</dbReference>
<dbReference type="RefSeq" id="XP_036020750.1">
    <molecule id="Q02395-2"/>
    <property type="nucleotide sequence ID" value="XM_036164857.1"/>
</dbReference>
<dbReference type="RefSeq" id="XP_036020751.1">
    <molecule id="Q02395-2"/>
    <property type="nucleotide sequence ID" value="XM_036164858.1"/>
</dbReference>
<dbReference type="RefSeq" id="XP_036020752.1">
    <molecule id="Q02395-2"/>
    <property type="nucleotide sequence ID" value="XM_036164859.1"/>
</dbReference>
<dbReference type="RefSeq" id="XP_036020753.1">
    <molecule id="Q02395-2"/>
    <property type="nucleotide sequence ID" value="XM_036164860.1"/>
</dbReference>
<dbReference type="RefSeq" id="XP_036020754.1">
    <molecule id="Q02395-2"/>
    <property type="nucleotide sequence ID" value="XM_036164861.1"/>
</dbReference>
<dbReference type="RefSeq" id="XP_036020755.1">
    <molecule id="Q02395-2"/>
    <property type="nucleotide sequence ID" value="XM_036164862.1"/>
</dbReference>
<dbReference type="RefSeq" id="XP_036020756.1">
    <molecule id="Q02395-2"/>
    <property type="nucleotide sequence ID" value="XM_036164863.1"/>
</dbReference>
<dbReference type="RefSeq" id="XP_036020758.1">
    <molecule id="Q02395-2"/>
    <property type="nucleotide sequence ID" value="XM_036164865.1"/>
</dbReference>
<dbReference type="RefSeq" id="XP_036020759.1">
    <molecule id="Q02395-2"/>
    <property type="nucleotide sequence ID" value="XM_036164866.1"/>
</dbReference>
<dbReference type="PDB" id="2EQJ">
    <property type="method" value="NMR"/>
    <property type="chains" value="A=40-98"/>
</dbReference>
<dbReference type="PDB" id="2YT5">
    <property type="method" value="NMR"/>
    <property type="chains" value="A=104-162"/>
</dbReference>
<dbReference type="PDBsum" id="2EQJ"/>
<dbReference type="PDBsum" id="2YT5"/>
<dbReference type="SMR" id="Q02395"/>
<dbReference type="BioGRID" id="201592">
    <property type="interactions" value="15"/>
</dbReference>
<dbReference type="DIP" id="DIP-56991N"/>
<dbReference type="FunCoup" id="Q02395">
    <property type="interactions" value="4862"/>
</dbReference>
<dbReference type="IntAct" id="Q02395">
    <property type="interactions" value="11"/>
</dbReference>
<dbReference type="STRING" id="10090.ENSMUSP00000080278"/>
<dbReference type="iPTMnet" id="Q02395"/>
<dbReference type="PhosphoSitePlus" id="Q02395"/>
<dbReference type="PaxDb" id="10090-ENSMUSP00000080278"/>
<dbReference type="PeptideAtlas" id="Q02395"/>
<dbReference type="ProteomicsDB" id="291431">
    <molecule id="Q02395-1"/>
</dbReference>
<dbReference type="ProteomicsDB" id="291432">
    <molecule id="Q02395-2"/>
</dbReference>
<dbReference type="Pumba" id="Q02395"/>
<dbReference type="Antibodypedia" id="19938">
    <property type="antibodies" value="182 antibodies from 29 providers"/>
</dbReference>
<dbReference type="DNASU" id="17765"/>
<dbReference type="Ensembl" id="ENSMUST00000081567.11">
    <molecule id="Q02395-1"/>
    <property type="protein sequence ID" value="ENSMUSP00000080278.5"/>
    <property type="gene ID" value="ENSMUSG00000029267.18"/>
</dbReference>
<dbReference type="GeneID" id="17765"/>
<dbReference type="KEGG" id="mmu:17765"/>
<dbReference type="UCSC" id="uc008ynj.2">
    <molecule id="Q02395-1"/>
    <property type="organism name" value="mouse"/>
</dbReference>
<dbReference type="AGR" id="MGI:105050"/>
<dbReference type="CTD" id="22823"/>
<dbReference type="MGI" id="MGI:105050">
    <property type="gene designation" value="Mtf2"/>
</dbReference>
<dbReference type="VEuPathDB" id="HostDB:ENSMUSG00000029267"/>
<dbReference type="eggNOG" id="KOG4323">
    <property type="taxonomic scope" value="Eukaryota"/>
</dbReference>
<dbReference type="GeneTree" id="ENSGT00950000183180"/>
<dbReference type="InParanoid" id="Q02395"/>
<dbReference type="OMA" id="XFYTFIC"/>
<dbReference type="PhylomeDB" id="Q02395"/>
<dbReference type="TreeFam" id="TF106420"/>
<dbReference type="Reactome" id="R-MMU-212300">
    <property type="pathway name" value="PRC2 methylates histones and DNA"/>
</dbReference>
<dbReference type="BioGRID-ORCS" id="17765">
    <property type="hits" value="1 hit in 80 CRISPR screens"/>
</dbReference>
<dbReference type="ChiTaRS" id="Mtf2">
    <property type="organism name" value="mouse"/>
</dbReference>
<dbReference type="EvolutionaryTrace" id="Q02395"/>
<dbReference type="PRO" id="PR:Q02395"/>
<dbReference type="Proteomes" id="UP000000589">
    <property type="component" value="Chromosome 5"/>
</dbReference>
<dbReference type="RNAct" id="Q02395">
    <property type="molecule type" value="protein"/>
</dbReference>
<dbReference type="Bgee" id="ENSMUSG00000029267">
    <property type="expression patterns" value="Expressed in otic placode and 279 other cell types or tissues"/>
</dbReference>
<dbReference type="ExpressionAtlas" id="Q02395">
    <property type="expression patterns" value="baseline and differential"/>
</dbReference>
<dbReference type="GO" id="GO:0005737">
    <property type="term" value="C:cytoplasm"/>
    <property type="evidence" value="ECO:0007669"/>
    <property type="project" value="Ensembl"/>
</dbReference>
<dbReference type="GO" id="GO:0005654">
    <property type="term" value="C:nucleoplasm"/>
    <property type="evidence" value="ECO:0007669"/>
    <property type="project" value="Ensembl"/>
</dbReference>
<dbReference type="GO" id="GO:0140003">
    <property type="term" value="F:histone H3K36me3 reader activity"/>
    <property type="evidence" value="ECO:0000314"/>
    <property type="project" value="UniProtKB"/>
</dbReference>
<dbReference type="GO" id="GO:0035064">
    <property type="term" value="F:methylated histone binding"/>
    <property type="evidence" value="ECO:0007669"/>
    <property type="project" value="UniProtKB-ARBA"/>
</dbReference>
<dbReference type="GO" id="GO:0000977">
    <property type="term" value="F:RNA polymerase II transcription regulatory region sequence-specific DNA binding"/>
    <property type="evidence" value="ECO:0000314"/>
    <property type="project" value="NTNU_SB"/>
</dbReference>
<dbReference type="GO" id="GO:0001222">
    <property type="term" value="F:transcription corepressor binding"/>
    <property type="evidence" value="ECO:0007669"/>
    <property type="project" value="Ensembl"/>
</dbReference>
<dbReference type="GO" id="GO:0008270">
    <property type="term" value="F:zinc ion binding"/>
    <property type="evidence" value="ECO:0007669"/>
    <property type="project" value="UniProtKB-KW"/>
</dbReference>
<dbReference type="GO" id="GO:1990830">
    <property type="term" value="P:cellular response to leukemia inhibitory factor"/>
    <property type="evidence" value="ECO:0000270"/>
    <property type="project" value="MGI"/>
</dbReference>
<dbReference type="GO" id="GO:0040029">
    <property type="term" value="P:epigenetic regulation of gene expression"/>
    <property type="evidence" value="ECO:0000315"/>
    <property type="project" value="UniProtKB"/>
</dbReference>
<dbReference type="GO" id="GO:0007379">
    <property type="term" value="P:segment specification"/>
    <property type="evidence" value="ECO:0000315"/>
    <property type="project" value="UniProtKB"/>
</dbReference>
<dbReference type="GO" id="GO:0048863">
    <property type="term" value="P:stem cell differentiation"/>
    <property type="evidence" value="ECO:0000315"/>
    <property type="project" value="UniProtKB"/>
</dbReference>
<dbReference type="GO" id="GO:0019827">
    <property type="term" value="P:stem cell population maintenance"/>
    <property type="evidence" value="ECO:0000315"/>
    <property type="project" value="UniProtKB"/>
</dbReference>
<dbReference type="CDD" id="cd15578">
    <property type="entry name" value="PHD1_MTF2"/>
    <property type="match status" value="1"/>
</dbReference>
<dbReference type="CDD" id="cd15580">
    <property type="entry name" value="PHD2_MTF2"/>
    <property type="match status" value="1"/>
</dbReference>
<dbReference type="CDD" id="cd20450">
    <property type="entry name" value="Tudor_MTF2"/>
    <property type="match status" value="1"/>
</dbReference>
<dbReference type="FunFam" id="2.30.30.140:FF:000014">
    <property type="entry name" value="Metal-response element-binding transcription factor 2"/>
    <property type="match status" value="1"/>
</dbReference>
<dbReference type="FunFam" id="3.30.40.10:FF:000126">
    <property type="entry name" value="metal-response element-binding transcription factor 2 isoform X1"/>
    <property type="match status" value="1"/>
</dbReference>
<dbReference type="FunFam" id="3.90.980.20:FF:000001">
    <property type="entry name" value="metal-response element-binding transcription factor 2 isoform X1"/>
    <property type="match status" value="1"/>
</dbReference>
<dbReference type="Gene3D" id="2.30.30.140">
    <property type="match status" value="1"/>
</dbReference>
<dbReference type="Gene3D" id="3.90.980.20">
    <property type="match status" value="1"/>
</dbReference>
<dbReference type="Gene3D" id="3.30.40.10">
    <property type="entry name" value="Zinc/RING finger domain, C3HC4 (zinc finger)"/>
    <property type="match status" value="1"/>
</dbReference>
<dbReference type="InterPro" id="IPR040477">
    <property type="entry name" value="KDM4-like_Tudor"/>
</dbReference>
<dbReference type="InterPro" id="IPR025894">
    <property type="entry name" value="Mtf2_C_dom"/>
</dbReference>
<dbReference type="InterPro" id="IPR042014">
    <property type="entry name" value="MTF2_PHD1"/>
</dbReference>
<dbReference type="InterPro" id="IPR042015">
    <property type="entry name" value="MTF2_PHD2"/>
</dbReference>
<dbReference type="InterPro" id="IPR002999">
    <property type="entry name" value="Tudor"/>
</dbReference>
<dbReference type="InterPro" id="IPR019786">
    <property type="entry name" value="Zinc_finger_PHD-type_CS"/>
</dbReference>
<dbReference type="InterPro" id="IPR011011">
    <property type="entry name" value="Znf_FYVE_PHD"/>
</dbReference>
<dbReference type="InterPro" id="IPR001965">
    <property type="entry name" value="Znf_PHD"/>
</dbReference>
<dbReference type="InterPro" id="IPR019787">
    <property type="entry name" value="Znf_PHD-finger"/>
</dbReference>
<dbReference type="InterPro" id="IPR013083">
    <property type="entry name" value="Znf_RING/FYVE/PHD"/>
</dbReference>
<dbReference type="PANTHER" id="PTHR12628:SF12">
    <property type="entry name" value="METAL-RESPONSE ELEMENT-BINDING TRANSCRIPTION FACTOR 2"/>
    <property type="match status" value="1"/>
</dbReference>
<dbReference type="PANTHER" id="PTHR12628">
    <property type="entry name" value="POLYCOMB-LIKE TRANSCRIPTION FACTOR"/>
    <property type="match status" value="1"/>
</dbReference>
<dbReference type="Pfam" id="PF14061">
    <property type="entry name" value="Mtf2_C"/>
    <property type="match status" value="1"/>
</dbReference>
<dbReference type="Pfam" id="PF00628">
    <property type="entry name" value="PHD"/>
    <property type="match status" value="1"/>
</dbReference>
<dbReference type="Pfam" id="PF18104">
    <property type="entry name" value="Tudor_2"/>
    <property type="match status" value="1"/>
</dbReference>
<dbReference type="SMART" id="SM00249">
    <property type="entry name" value="PHD"/>
    <property type="match status" value="2"/>
</dbReference>
<dbReference type="SMART" id="SM00333">
    <property type="entry name" value="TUDOR"/>
    <property type="match status" value="1"/>
</dbReference>
<dbReference type="SUPFAM" id="SSF57903">
    <property type="entry name" value="FYVE/PHD zinc finger"/>
    <property type="match status" value="2"/>
</dbReference>
<dbReference type="SUPFAM" id="SSF63748">
    <property type="entry name" value="Tudor/PWWP/MBT"/>
    <property type="match status" value="1"/>
</dbReference>
<dbReference type="PROSITE" id="PS01359">
    <property type="entry name" value="ZF_PHD_1"/>
    <property type="match status" value="2"/>
</dbReference>
<dbReference type="PROSITE" id="PS50016">
    <property type="entry name" value="ZF_PHD_2"/>
    <property type="match status" value="1"/>
</dbReference>
<evidence type="ECO:0000250" key="1">
    <source>
        <dbReference type="UniProtKB" id="Q9Y483"/>
    </source>
</evidence>
<evidence type="ECO:0000255" key="2">
    <source>
        <dbReference type="PROSITE-ProRule" id="PRU00146"/>
    </source>
</evidence>
<evidence type="ECO:0000256" key="3">
    <source>
        <dbReference type="SAM" id="MobiDB-lite"/>
    </source>
</evidence>
<evidence type="ECO:0000269" key="4">
    <source>
    </source>
</evidence>
<evidence type="ECO:0000269" key="5">
    <source>
    </source>
</evidence>
<evidence type="ECO:0000269" key="6">
    <source>
    </source>
</evidence>
<evidence type="ECO:0000269" key="7">
    <source>
    </source>
</evidence>
<evidence type="ECO:0000269" key="8">
    <source>
    </source>
</evidence>
<evidence type="ECO:0000269" key="9">
    <source>
    </source>
</evidence>
<evidence type="ECO:0000303" key="10">
    <source>
    </source>
</evidence>
<evidence type="ECO:0000303" key="11">
    <source>
    </source>
</evidence>
<evidence type="ECO:0000303" key="12">
    <source>
    </source>
</evidence>
<evidence type="ECO:0000305" key="13"/>
<evidence type="ECO:0007829" key="14">
    <source>
        <dbReference type="PDB" id="2EQJ"/>
    </source>
</evidence>
<evidence type="ECO:0007829" key="15">
    <source>
        <dbReference type="PDB" id="2YT5"/>
    </source>
</evidence>
<protein>
    <recommendedName>
        <fullName>Metal-response element-binding transcription factor 2</fullName>
    </recommendedName>
    <alternativeName>
        <fullName>Metal regulatory transcription factor 2</fullName>
    </alternativeName>
    <alternativeName>
        <fullName>Metal-response element DNA-binding protein M96</fullName>
    </alternativeName>
    <alternativeName>
        <fullName>Polycomb-like protein 2</fullName>
        <shortName>mPCl2</shortName>
    </alternativeName>
    <alternativeName>
        <fullName>Zinc-regulated factor 1</fullName>
        <shortName>ZiRF1</shortName>
    </alternativeName>
</protein>
<gene>
    <name type="primary">Mtf2</name>
    <name type="synonym">Pcl2</name>
</gene>
<proteinExistence type="evidence at protein level"/>
<accession>Q02395</accession>
<accession>Q05C61</accession>
<accession>Q569Z8</accession>
<accession>Q6PG89</accession>
<accession>Q8BGP9</accession>
<accession>Q8BSJ7</accession>
<keyword id="KW-0002">3D-structure</keyword>
<keyword id="KW-0025">Alternative splicing</keyword>
<keyword id="KW-0156">Chromatin regulator</keyword>
<keyword id="KW-0238">DNA-binding</keyword>
<keyword id="KW-1017">Isopeptide bond</keyword>
<keyword id="KW-0479">Metal-binding</keyword>
<keyword id="KW-0539">Nucleus</keyword>
<keyword id="KW-0597">Phosphoprotein</keyword>
<keyword id="KW-1185">Reference proteome</keyword>
<keyword id="KW-0677">Repeat</keyword>
<keyword id="KW-0832">Ubl conjugation</keyword>
<keyword id="KW-0862">Zinc</keyword>
<keyword id="KW-0863">Zinc-finger</keyword>
<organism>
    <name type="scientific">Mus musculus</name>
    <name type="common">Mouse</name>
    <dbReference type="NCBI Taxonomy" id="10090"/>
    <lineage>
        <taxon>Eukaryota</taxon>
        <taxon>Metazoa</taxon>
        <taxon>Chordata</taxon>
        <taxon>Craniata</taxon>
        <taxon>Vertebrata</taxon>
        <taxon>Euteleostomi</taxon>
        <taxon>Mammalia</taxon>
        <taxon>Eutheria</taxon>
        <taxon>Euarchontoglires</taxon>
        <taxon>Glires</taxon>
        <taxon>Rodentia</taxon>
        <taxon>Myomorpha</taxon>
        <taxon>Muroidea</taxon>
        <taxon>Muridae</taxon>
        <taxon>Murinae</taxon>
        <taxon>Mus</taxon>
        <taxon>Mus</taxon>
    </lineage>
</organism>